<evidence type="ECO:0000250" key="1"/>
<evidence type="ECO:0000250" key="2">
    <source>
        <dbReference type="UniProtKB" id="P61769"/>
    </source>
</evidence>
<evidence type="ECO:0000255" key="3">
    <source>
        <dbReference type="PROSITE-ProRule" id="PRU00114"/>
    </source>
</evidence>
<evidence type="ECO:0000305" key="4"/>
<evidence type="ECO:0007829" key="5">
    <source>
        <dbReference type="PDB" id="7SR5"/>
    </source>
</evidence>
<accession>P16213</accession>
<accession>Q5R832</accession>
<reference key="1">
    <citation type="journal article" date="1990" name="Immunol. Rev.">
        <title>Comparison of class I MHC alleles in humans and apes.</title>
        <authorList>
            <person name="Lawlor D.A."/>
            <person name="Warren E."/>
            <person name="Ward F.E."/>
            <person name="Parham P."/>
        </authorList>
    </citation>
    <scope>NUCLEOTIDE SEQUENCE [MRNA]</scope>
</reference>
<reference key="2">
    <citation type="submission" date="2004-11" db="EMBL/GenBank/DDBJ databases">
        <authorList>
            <consortium name="The German cDNA consortium"/>
        </authorList>
    </citation>
    <scope>NUCLEOTIDE SEQUENCE [LARGE SCALE MRNA]</scope>
    <source>
        <tissue>Heart</tissue>
    </source>
</reference>
<name>B2MG_PONPY</name>
<dbReference type="EMBL" id="M30682">
    <property type="protein sequence ID" value="AAA88837.1"/>
    <property type="molecule type" value="mRNA"/>
</dbReference>
<dbReference type="EMBL" id="CR859923">
    <property type="protein sequence ID" value="CAH92078.1"/>
    <property type="molecule type" value="mRNA"/>
</dbReference>
<dbReference type="PIR" id="I61868">
    <property type="entry name" value="I61868"/>
</dbReference>
<dbReference type="PDB" id="7SR5">
    <property type="method" value="X-ray"/>
    <property type="resolution" value="2.35 A"/>
    <property type="chains" value="A/C=21-119"/>
</dbReference>
<dbReference type="PDB" id="7SRK">
    <property type="method" value="X-ray"/>
    <property type="resolution" value="2.50 A"/>
    <property type="chains" value="A/C=22-119"/>
</dbReference>
<dbReference type="PDB" id="7STG">
    <property type="method" value="X-ray"/>
    <property type="resolution" value="2.70 A"/>
    <property type="chains" value="A/C/E/G/I/K/M/O/Q/S/U/W/Y/a/c/e=22-119"/>
</dbReference>
<dbReference type="PDBsum" id="7SR5"/>
<dbReference type="PDBsum" id="7SRK"/>
<dbReference type="PDBsum" id="7STG"/>
<dbReference type="BMRB" id="P16213"/>
<dbReference type="SMR" id="P16213"/>
<dbReference type="GO" id="GO:0005576">
    <property type="term" value="C:extracellular region"/>
    <property type="evidence" value="ECO:0007669"/>
    <property type="project" value="UniProtKB-SubCell"/>
</dbReference>
<dbReference type="GO" id="GO:0042612">
    <property type="term" value="C:MHC class I protein complex"/>
    <property type="evidence" value="ECO:0007669"/>
    <property type="project" value="UniProtKB-KW"/>
</dbReference>
<dbReference type="GO" id="GO:0002474">
    <property type="term" value="P:antigen processing and presentation of peptide antigen via MHC class I"/>
    <property type="evidence" value="ECO:0007669"/>
    <property type="project" value="UniProtKB-KW"/>
</dbReference>
<dbReference type="GO" id="GO:0006955">
    <property type="term" value="P:immune response"/>
    <property type="evidence" value="ECO:0007669"/>
    <property type="project" value="InterPro"/>
</dbReference>
<dbReference type="CDD" id="cd05770">
    <property type="entry name" value="IgC1_beta2m"/>
    <property type="match status" value="1"/>
</dbReference>
<dbReference type="FunFam" id="2.60.40.10:FF:001005">
    <property type="entry name" value="Beta-2-microglobulin"/>
    <property type="match status" value="1"/>
</dbReference>
<dbReference type="Gene3D" id="2.60.40.10">
    <property type="entry name" value="Immunoglobulins"/>
    <property type="match status" value="1"/>
</dbReference>
<dbReference type="InterPro" id="IPR015707">
    <property type="entry name" value="B2Microglobulin"/>
</dbReference>
<dbReference type="InterPro" id="IPR007110">
    <property type="entry name" value="Ig-like_dom"/>
</dbReference>
<dbReference type="InterPro" id="IPR036179">
    <property type="entry name" value="Ig-like_dom_sf"/>
</dbReference>
<dbReference type="InterPro" id="IPR013783">
    <property type="entry name" value="Ig-like_fold"/>
</dbReference>
<dbReference type="InterPro" id="IPR003006">
    <property type="entry name" value="Ig/MHC_CS"/>
</dbReference>
<dbReference type="InterPro" id="IPR003597">
    <property type="entry name" value="Ig_C1-set"/>
</dbReference>
<dbReference type="InterPro" id="IPR050160">
    <property type="entry name" value="MHC/Immunoglobulin"/>
</dbReference>
<dbReference type="PANTHER" id="PTHR19944:SF62">
    <property type="entry name" value="BETA-2-MICROGLOBULIN"/>
    <property type="match status" value="1"/>
</dbReference>
<dbReference type="PANTHER" id="PTHR19944">
    <property type="entry name" value="MHC CLASS II-RELATED"/>
    <property type="match status" value="1"/>
</dbReference>
<dbReference type="Pfam" id="PF07654">
    <property type="entry name" value="C1-set"/>
    <property type="match status" value="1"/>
</dbReference>
<dbReference type="SMART" id="SM00407">
    <property type="entry name" value="IGc1"/>
    <property type="match status" value="1"/>
</dbReference>
<dbReference type="SUPFAM" id="SSF48726">
    <property type="entry name" value="Immunoglobulin"/>
    <property type="match status" value="1"/>
</dbReference>
<dbReference type="PROSITE" id="PS50835">
    <property type="entry name" value="IG_LIKE"/>
    <property type="match status" value="1"/>
</dbReference>
<dbReference type="PROSITE" id="PS00290">
    <property type="entry name" value="IG_MHC"/>
    <property type="match status" value="1"/>
</dbReference>
<sequence length="119" mass="13715">MSRSVALAVLALLSLSGLEAIQRTPKIQVYSRHPAENGKSNFLNCYVSGFHPSDIEVDLLKNGERIEKVEHSDLSFSKDWSFYLLYYTEFTPTEKDEYACRVNHVTLSQPKIVKWDRDM</sequence>
<organism>
    <name type="scientific">Pongo pygmaeus</name>
    <name type="common">Bornean orangutan</name>
    <dbReference type="NCBI Taxonomy" id="9600"/>
    <lineage>
        <taxon>Eukaryota</taxon>
        <taxon>Metazoa</taxon>
        <taxon>Chordata</taxon>
        <taxon>Craniata</taxon>
        <taxon>Vertebrata</taxon>
        <taxon>Euteleostomi</taxon>
        <taxon>Mammalia</taxon>
        <taxon>Eutheria</taxon>
        <taxon>Euarchontoglires</taxon>
        <taxon>Primates</taxon>
        <taxon>Haplorrhini</taxon>
        <taxon>Catarrhini</taxon>
        <taxon>Hominidae</taxon>
        <taxon>Pongo</taxon>
    </lineage>
</organism>
<feature type="signal peptide" evidence="1">
    <location>
        <begin position="1"/>
        <end position="20"/>
    </location>
</feature>
<feature type="chain" id="PRO_0000018789" description="Beta-2-microglobulin">
    <location>
        <begin position="21"/>
        <end position="119"/>
    </location>
</feature>
<feature type="domain" description="Ig-like C1-type">
    <location>
        <begin position="25"/>
        <end position="113"/>
    </location>
</feature>
<feature type="disulfide bond" evidence="3">
    <location>
        <begin position="45"/>
        <end position="100"/>
    </location>
</feature>
<feature type="sequence conflict" description="In Ref. 1; AAA88837." evidence="4" ref="1">
    <original>S</original>
    <variation>T</variation>
    <location>
        <position position="31"/>
    </location>
</feature>
<feature type="sequence conflict" description="In Ref. 1; AAA88837." evidence="4" ref="1">
    <original>ER</original>
    <variation>VK</variation>
    <location>
        <begin position="64"/>
        <end position="65"/>
    </location>
</feature>
<feature type="sequence conflict" description="In Ref. 1; AAA88837." evidence="4" ref="1">
    <original>I</original>
    <variation>T</variation>
    <location>
        <position position="112"/>
    </location>
</feature>
<feature type="strand" evidence="5">
    <location>
        <begin position="26"/>
        <end position="33"/>
    </location>
</feature>
<feature type="strand" evidence="5">
    <location>
        <begin position="41"/>
        <end position="53"/>
    </location>
</feature>
<feature type="strand" evidence="5">
    <location>
        <begin position="56"/>
        <end position="65"/>
    </location>
</feature>
<feature type="strand" evidence="5">
    <location>
        <begin position="82"/>
        <end position="90"/>
    </location>
</feature>
<feature type="strand" evidence="5">
    <location>
        <begin position="98"/>
        <end position="103"/>
    </location>
</feature>
<feature type="strand" evidence="5">
    <location>
        <begin position="111"/>
        <end position="114"/>
    </location>
</feature>
<proteinExistence type="evidence at protein level"/>
<comment type="function">
    <text evidence="1">Component of the class I major histocompatibility complex (MHC). Involved in the presentation of peptide antigens to the immune system (By similarity).</text>
</comment>
<comment type="subunit">
    <text evidence="2">Heterodimer of an alpha chain and a beta chain. Beta-2-microglobulin is the beta-chain of major histocompatibility complex class I molecules. Forms a heterotrimer with MR1 and a metabolite antigen.</text>
</comment>
<comment type="subcellular location">
    <subcellularLocation>
        <location evidence="1">Secreted</location>
    </subcellularLocation>
</comment>
<comment type="similarity">
    <text evidence="4">Belongs to the beta-2-microglobulin family.</text>
</comment>
<gene>
    <name type="primary">B2M</name>
</gene>
<keyword id="KW-0002">3D-structure</keyword>
<keyword id="KW-1015">Disulfide bond</keyword>
<keyword id="KW-0391">Immunity</keyword>
<keyword id="KW-0393">Immunoglobulin domain</keyword>
<keyword id="KW-0490">MHC I</keyword>
<keyword id="KW-0964">Secreted</keyword>
<keyword id="KW-0732">Signal</keyword>
<protein>
    <recommendedName>
        <fullName>Beta-2-microglobulin</fullName>
    </recommendedName>
</protein>